<gene>
    <name evidence="1" type="primary">cheB</name>
    <name type="ordered locus">DP2644</name>
</gene>
<comment type="function">
    <text evidence="1">Involved in chemotaxis. Part of a chemotaxis signal transduction system that modulates chemotaxis in response to various stimuli. Catalyzes the demethylation of specific methylglutamate residues introduced into the chemoreceptors (methyl-accepting chemotaxis proteins or MCP) by CheR. Also mediates the irreversible deamidation of specific glutamine residues to glutamic acid.</text>
</comment>
<comment type="catalytic activity">
    <reaction evidence="1">
        <text>[protein]-L-glutamate 5-O-methyl ester + H2O = L-glutamyl-[protein] + methanol + H(+)</text>
        <dbReference type="Rhea" id="RHEA:23236"/>
        <dbReference type="Rhea" id="RHEA-COMP:10208"/>
        <dbReference type="Rhea" id="RHEA-COMP:10311"/>
        <dbReference type="ChEBI" id="CHEBI:15377"/>
        <dbReference type="ChEBI" id="CHEBI:15378"/>
        <dbReference type="ChEBI" id="CHEBI:17790"/>
        <dbReference type="ChEBI" id="CHEBI:29973"/>
        <dbReference type="ChEBI" id="CHEBI:82795"/>
        <dbReference type="EC" id="3.1.1.61"/>
    </reaction>
</comment>
<comment type="catalytic activity">
    <reaction evidence="1">
        <text>L-glutaminyl-[protein] + H2O = L-glutamyl-[protein] + NH4(+)</text>
        <dbReference type="Rhea" id="RHEA:16441"/>
        <dbReference type="Rhea" id="RHEA-COMP:10207"/>
        <dbReference type="Rhea" id="RHEA-COMP:10208"/>
        <dbReference type="ChEBI" id="CHEBI:15377"/>
        <dbReference type="ChEBI" id="CHEBI:28938"/>
        <dbReference type="ChEBI" id="CHEBI:29973"/>
        <dbReference type="ChEBI" id="CHEBI:30011"/>
        <dbReference type="EC" id="3.5.1.44"/>
    </reaction>
</comment>
<comment type="subcellular location">
    <subcellularLocation>
        <location evidence="1">Cytoplasm</location>
    </subcellularLocation>
</comment>
<comment type="domain">
    <text evidence="1">Contains a C-terminal catalytic domain, and an N-terminal region which modulates catalytic activity.</text>
</comment>
<comment type="PTM">
    <text evidence="1">Phosphorylated by CheA. Phosphorylation of the N-terminal regulatory domain activates the methylesterase activity.</text>
</comment>
<comment type="similarity">
    <text evidence="1">Belongs to the CheB family.</text>
</comment>
<reference key="1">
    <citation type="journal article" date="2004" name="Environ. Microbiol.">
        <title>The genome of Desulfotalea psychrophila, a sulfate-reducing bacterium from permanently cold Arctic sediments.</title>
        <authorList>
            <person name="Rabus R."/>
            <person name="Ruepp A."/>
            <person name="Frickey T."/>
            <person name="Rattei T."/>
            <person name="Fartmann B."/>
            <person name="Stark M."/>
            <person name="Bauer M."/>
            <person name="Zibat A."/>
            <person name="Lombardot T."/>
            <person name="Becker I."/>
            <person name="Amann J."/>
            <person name="Gellner K."/>
            <person name="Teeling H."/>
            <person name="Leuschner W.D."/>
            <person name="Gloeckner F.-O."/>
            <person name="Lupas A.N."/>
            <person name="Amann R."/>
            <person name="Klenk H.-P."/>
        </authorList>
    </citation>
    <scope>NUCLEOTIDE SEQUENCE [LARGE SCALE GENOMIC DNA]</scope>
    <source>
        <strain>DSM 12343 / LSv54</strain>
    </source>
</reference>
<evidence type="ECO:0000255" key="1">
    <source>
        <dbReference type="HAMAP-Rule" id="MF_00099"/>
    </source>
</evidence>
<dbReference type="EC" id="3.1.1.61" evidence="1"/>
<dbReference type="EC" id="3.5.1.44" evidence="1"/>
<dbReference type="EMBL" id="CR522870">
    <property type="protein sequence ID" value="CAG37373.1"/>
    <property type="molecule type" value="Genomic_DNA"/>
</dbReference>
<dbReference type="RefSeq" id="WP_011189885.1">
    <property type="nucleotide sequence ID" value="NC_006138.1"/>
</dbReference>
<dbReference type="SMR" id="Q6AJV3"/>
<dbReference type="STRING" id="177439.DP2644"/>
<dbReference type="KEGG" id="dps:DP2644"/>
<dbReference type="eggNOG" id="COG2201">
    <property type="taxonomic scope" value="Bacteria"/>
</dbReference>
<dbReference type="HOGENOM" id="CLU_000445_51_0_7"/>
<dbReference type="OrthoDB" id="9793421at2"/>
<dbReference type="Proteomes" id="UP000000602">
    <property type="component" value="Chromosome"/>
</dbReference>
<dbReference type="GO" id="GO:0005737">
    <property type="term" value="C:cytoplasm"/>
    <property type="evidence" value="ECO:0007669"/>
    <property type="project" value="UniProtKB-SubCell"/>
</dbReference>
<dbReference type="GO" id="GO:0000156">
    <property type="term" value="F:phosphorelay response regulator activity"/>
    <property type="evidence" value="ECO:0007669"/>
    <property type="project" value="InterPro"/>
</dbReference>
<dbReference type="GO" id="GO:0008984">
    <property type="term" value="F:protein-glutamate methylesterase activity"/>
    <property type="evidence" value="ECO:0007669"/>
    <property type="project" value="UniProtKB-UniRule"/>
</dbReference>
<dbReference type="GO" id="GO:0050568">
    <property type="term" value="F:protein-glutamine glutaminase activity"/>
    <property type="evidence" value="ECO:0007669"/>
    <property type="project" value="UniProtKB-UniRule"/>
</dbReference>
<dbReference type="GO" id="GO:0006935">
    <property type="term" value="P:chemotaxis"/>
    <property type="evidence" value="ECO:0007669"/>
    <property type="project" value="UniProtKB-UniRule"/>
</dbReference>
<dbReference type="CDD" id="cd16432">
    <property type="entry name" value="CheB_Rec"/>
    <property type="match status" value="1"/>
</dbReference>
<dbReference type="CDD" id="cd17541">
    <property type="entry name" value="REC_CheB-like"/>
    <property type="match status" value="1"/>
</dbReference>
<dbReference type="Gene3D" id="3.40.50.2300">
    <property type="match status" value="1"/>
</dbReference>
<dbReference type="Gene3D" id="3.40.50.180">
    <property type="entry name" value="Methylesterase CheB, C-terminal domain"/>
    <property type="match status" value="1"/>
</dbReference>
<dbReference type="HAMAP" id="MF_00099">
    <property type="entry name" value="CheB_chemtxs"/>
    <property type="match status" value="1"/>
</dbReference>
<dbReference type="InterPro" id="IPR008248">
    <property type="entry name" value="CheB-like"/>
</dbReference>
<dbReference type="InterPro" id="IPR035909">
    <property type="entry name" value="CheB_C"/>
</dbReference>
<dbReference type="InterPro" id="IPR011006">
    <property type="entry name" value="CheY-like_superfamily"/>
</dbReference>
<dbReference type="InterPro" id="IPR000673">
    <property type="entry name" value="Sig_transdc_resp-reg_Me-estase"/>
</dbReference>
<dbReference type="InterPro" id="IPR001789">
    <property type="entry name" value="Sig_transdc_resp-reg_receiver"/>
</dbReference>
<dbReference type="NCBIfam" id="NF001965">
    <property type="entry name" value="PRK00742.1"/>
    <property type="match status" value="1"/>
</dbReference>
<dbReference type="PANTHER" id="PTHR42872">
    <property type="entry name" value="PROTEIN-GLUTAMATE METHYLESTERASE/PROTEIN-GLUTAMINE GLUTAMINASE"/>
    <property type="match status" value="1"/>
</dbReference>
<dbReference type="PANTHER" id="PTHR42872:SF3">
    <property type="entry name" value="PROTEIN-GLUTAMATE METHYLESTERASE_PROTEIN-GLUTAMINE GLUTAMINASE 1"/>
    <property type="match status" value="1"/>
</dbReference>
<dbReference type="Pfam" id="PF01339">
    <property type="entry name" value="CheB_methylest"/>
    <property type="match status" value="1"/>
</dbReference>
<dbReference type="Pfam" id="PF00072">
    <property type="entry name" value="Response_reg"/>
    <property type="match status" value="1"/>
</dbReference>
<dbReference type="PIRSF" id="PIRSF000876">
    <property type="entry name" value="RR_chemtxs_CheB"/>
    <property type="match status" value="1"/>
</dbReference>
<dbReference type="SMART" id="SM00448">
    <property type="entry name" value="REC"/>
    <property type="match status" value="1"/>
</dbReference>
<dbReference type="SUPFAM" id="SSF52172">
    <property type="entry name" value="CheY-like"/>
    <property type="match status" value="1"/>
</dbReference>
<dbReference type="SUPFAM" id="SSF52738">
    <property type="entry name" value="Methylesterase CheB, C-terminal domain"/>
    <property type="match status" value="1"/>
</dbReference>
<dbReference type="PROSITE" id="PS50122">
    <property type="entry name" value="CHEB"/>
    <property type="match status" value="1"/>
</dbReference>
<dbReference type="PROSITE" id="PS50110">
    <property type="entry name" value="RESPONSE_REGULATORY"/>
    <property type="match status" value="1"/>
</dbReference>
<keyword id="KW-0145">Chemotaxis</keyword>
<keyword id="KW-0963">Cytoplasm</keyword>
<keyword id="KW-0378">Hydrolase</keyword>
<keyword id="KW-0597">Phosphoprotein</keyword>
<keyword id="KW-1185">Reference proteome</keyword>
<organism>
    <name type="scientific">Desulfotalea psychrophila (strain LSv54 / DSM 12343)</name>
    <dbReference type="NCBI Taxonomy" id="177439"/>
    <lineage>
        <taxon>Bacteria</taxon>
        <taxon>Pseudomonadati</taxon>
        <taxon>Thermodesulfobacteriota</taxon>
        <taxon>Desulfobulbia</taxon>
        <taxon>Desulfobulbales</taxon>
        <taxon>Desulfocapsaceae</taxon>
        <taxon>Desulfotalea</taxon>
    </lineage>
</organism>
<accession>Q6AJV3</accession>
<protein>
    <recommendedName>
        <fullName evidence="1">Protein-glutamate methylesterase/protein-glutamine glutaminase</fullName>
        <ecNumber evidence="1">3.1.1.61</ecNumber>
        <ecNumber evidence="1">3.5.1.44</ecNumber>
    </recommendedName>
</protein>
<feature type="chain" id="PRO_0000225457" description="Protein-glutamate methylesterase/protein-glutamine glutaminase">
    <location>
        <begin position="1"/>
        <end position="364"/>
    </location>
</feature>
<feature type="domain" description="Response regulatory" evidence="1">
    <location>
        <begin position="5"/>
        <end position="123"/>
    </location>
</feature>
<feature type="domain" description="CheB-type methylesterase" evidence="1">
    <location>
        <begin position="174"/>
        <end position="364"/>
    </location>
</feature>
<feature type="active site" evidence="1">
    <location>
        <position position="181"/>
    </location>
</feature>
<feature type="active site" evidence="1">
    <location>
        <position position="208"/>
    </location>
</feature>
<feature type="active site" evidence="1">
    <location>
        <position position="306"/>
    </location>
</feature>
<feature type="modified residue" description="4-aspartylphosphate" evidence="1">
    <location>
        <position position="56"/>
    </location>
</feature>
<sequence>MKNLRVLVVDDTILYRKIVSDLLREIPGIEVIGVAHNGKIALDKIRLSKPDLITLDIEMPVMNGIELLEHLKDIPDAPGAVMLSTLTSDGSRMTMKALELGAFDFILKPQEKTPAANKAALANSLKQIVKTYRLRNIGFSRTRATTPASRLSPRTTIKREIKTTDRSIKKGKAEIVVIGISTGGPNALTNMLPQIPGNIGVPILIVQHMPPVFTASLATSLNKKCQIEVKEAEDGEAIQPGIAYIAPGGKQMKISASKNGVERLIKITNDPPENSCRPSVDYLFRSVGDYFIGRATAVIMTGMGADGTKGLEVLMAKGAHSIGQDEESCVVYGMPKSVADAGLIDTVCPLNKIAQEIVHTVKLY</sequence>
<name>CHEB_DESPS</name>
<proteinExistence type="inferred from homology"/>